<gene>
    <name type="primary">mtr4</name>
    <name type="ORF">SPAC6F12.16c</name>
</gene>
<feature type="chain" id="PRO_0000102098" description="ATP-dependent RNA helicase mtr4">
    <location>
        <begin position="1"/>
        <end position="1117"/>
    </location>
</feature>
<feature type="domain" description="Helicase ATP-binding" evidence="2">
    <location>
        <begin position="207"/>
        <end position="363"/>
    </location>
</feature>
<feature type="domain" description="Helicase C-terminal" evidence="3">
    <location>
        <begin position="441"/>
        <end position="642"/>
    </location>
</feature>
<feature type="region of interest" description="Disordered" evidence="4">
    <location>
        <begin position="19"/>
        <end position="86"/>
    </location>
</feature>
<feature type="region of interest" description="Disordered" evidence="4">
    <location>
        <begin position="414"/>
        <end position="433"/>
    </location>
</feature>
<feature type="short sequence motif" description="DEIH box">
    <location>
        <begin position="311"/>
        <end position="314"/>
    </location>
</feature>
<feature type="compositionally biased region" description="Basic and acidic residues" evidence="4">
    <location>
        <begin position="65"/>
        <end position="79"/>
    </location>
</feature>
<feature type="binding site" evidence="2">
    <location>
        <begin position="220"/>
        <end position="227"/>
    </location>
    <ligand>
        <name>ATP</name>
        <dbReference type="ChEBI" id="CHEBI:30616"/>
    </ligand>
</feature>
<feature type="sequence conflict" description="In Ref. 2; BAA87151." evidence="9" ref="2">
    <original>Y</original>
    <variation>S</variation>
    <location>
        <position position="758"/>
    </location>
</feature>
<sequence length="1117" mass="126191">MFGGELDDAFGVFEGKVPKSLKEESKNSQNSQNSQKIKRTLTDKNASNQEQGTKKLESSVGEQESATKRAKIENLKDNQDLIPNNDVNGIHINNSAVADTKHKPKIGDIAADDISNEVSIKNEGDTIPEATVADSFEQEASLQVAGKVGMTEAKSSTEEVVELRHQVRHQVSIPPNYDYVPISKHKSPIPPARTYPFTLDPFQAVSIACIERQESVLVSAHTSAGKTVVAEYAVAQSLRDKQRVIYTSPIKALSNQKYRELLAEFGDVGLMTGDVTINPDATCLVMTTEILRSMLYRGSEVMREVAWVIFDEIHYMRDKERGVVWEETIILLPDKSHFVFLSATIPNAMQFAEWITKIHRQPCHVVYTDFRPTPLQHYLFPSGSDGIHLVVDEKSNFREENFQRAMSALMEKQGDDPAAMATKGNAKKGKTGKGGVKGPSDIYKIVKMIMVKNYNPVIVFSFSKRECEALALQMSKLDMNDQTERDLVTTIFNNAVNQLSEKDRELPQIEHILPLLRRGIGIHHSGLLPILKEVIEILFQEGLLKVLFATETFSIGLNMPAKTVVFTNVRKFDGKTFRWISGGEYIQMSGRAGRRGLDDRGIVILMIDEKMDPPVAKSMLKGEADRLDSAFHLSYNMILNLLRVEGISPEFMLERCFFQFQNSLEVPKLEAKLEESQQHYDSFTILDERPLEEYHTLKTQLERYRTDVRTVVNHPNFCLSFLQGGRLVRVKVGNEDFDWGVVVNVSKRPLPKGQSNEYLPQESYIVHTLVMVASDTGPLRIRSGHLPEVHPPAAEDKGKFEVVPFLLSSLDGIAHIRVFLPNDLKSQGQKLTVGKALSEVKRRFPEGITLLDPVENMNIKEPTFIKLMKKVNILESRLLSNPLHNFSELEEKYAEYLRKLALLEEVKDLKKKLSKARSIMQLDELNSRKRVLRRLGFTTSDDVIEVKGRVACEISSGDGLLLTELIFNGMFNDLTPEQCAALLSCLVFQEKSEVENQRMKEELAGPLKILQEMARRIAKVSKESKQELNEEEYVNSFKPSLMEVVYAWAHGASFAQICKMTDVYEGSLIRMFRRLEELIRQMVDAAKVIGNTSLQQKMEDTIACIHRDIVFSASLYL</sequence>
<proteinExistence type="evidence at protein level"/>
<reference key="1">
    <citation type="journal article" date="2002" name="Nature">
        <title>The genome sequence of Schizosaccharomyces pombe.</title>
        <authorList>
            <person name="Wood V."/>
            <person name="Gwilliam R."/>
            <person name="Rajandream M.A."/>
            <person name="Lyne M.H."/>
            <person name="Lyne R."/>
            <person name="Stewart A."/>
            <person name="Sgouros J.G."/>
            <person name="Peat N."/>
            <person name="Hayles J."/>
            <person name="Baker S.G."/>
            <person name="Basham D."/>
            <person name="Bowman S."/>
            <person name="Brooks K."/>
            <person name="Brown D."/>
            <person name="Brown S."/>
            <person name="Chillingworth T."/>
            <person name="Churcher C.M."/>
            <person name="Collins M."/>
            <person name="Connor R."/>
            <person name="Cronin A."/>
            <person name="Davis P."/>
            <person name="Feltwell T."/>
            <person name="Fraser A."/>
            <person name="Gentles S."/>
            <person name="Goble A."/>
            <person name="Hamlin N."/>
            <person name="Harris D.E."/>
            <person name="Hidalgo J."/>
            <person name="Hodgson G."/>
            <person name="Holroyd S."/>
            <person name="Hornsby T."/>
            <person name="Howarth S."/>
            <person name="Huckle E.J."/>
            <person name="Hunt S."/>
            <person name="Jagels K."/>
            <person name="James K.D."/>
            <person name="Jones L."/>
            <person name="Jones M."/>
            <person name="Leather S."/>
            <person name="McDonald S."/>
            <person name="McLean J."/>
            <person name="Mooney P."/>
            <person name="Moule S."/>
            <person name="Mungall K.L."/>
            <person name="Murphy L.D."/>
            <person name="Niblett D."/>
            <person name="Odell C."/>
            <person name="Oliver K."/>
            <person name="O'Neil S."/>
            <person name="Pearson D."/>
            <person name="Quail M.A."/>
            <person name="Rabbinowitsch E."/>
            <person name="Rutherford K.M."/>
            <person name="Rutter S."/>
            <person name="Saunders D."/>
            <person name="Seeger K."/>
            <person name="Sharp S."/>
            <person name="Skelton J."/>
            <person name="Simmonds M.N."/>
            <person name="Squares R."/>
            <person name="Squares S."/>
            <person name="Stevens K."/>
            <person name="Taylor K."/>
            <person name="Taylor R.G."/>
            <person name="Tivey A."/>
            <person name="Walsh S.V."/>
            <person name="Warren T."/>
            <person name="Whitehead S."/>
            <person name="Woodward J.R."/>
            <person name="Volckaert G."/>
            <person name="Aert R."/>
            <person name="Robben J."/>
            <person name="Grymonprez B."/>
            <person name="Weltjens I."/>
            <person name="Vanstreels E."/>
            <person name="Rieger M."/>
            <person name="Schaefer M."/>
            <person name="Mueller-Auer S."/>
            <person name="Gabel C."/>
            <person name="Fuchs M."/>
            <person name="Duesterhoeft A."/>
            <person name="Fritzc C."/>
            <person name="Holzer E."/>
            <person name="Moestl D."/>
            <person name="Hilbert H."/>
            <person name="Borzym K."/>
            <person name="Langer I."/>
            <person name="Beck A."/>
            <person name="Lehrach H."/>
            <person name="Reinhardt R."/>
            <person name="Pohl T.M."/>
            <person name="Eger P."/>
            <person name="Zimmermann W."/>
            <person name="Wedler H."/>
            <person name="Wambutt R."/>
            <person name="Purnelle B."/>
            <person name="Goffeau A."/>
            <person name="Cadieu E."/>
            <person name="Dreano S."/>
            <person name="Gloux S."/>
            <person name="Lelaure V."/>
            <person name="Mottier S."/>
            <person name="Galibert F."/>
            <person name="Aves S.J."/>
            <person name="Xiang Z."/>
            <person name="Hunt C."/>
            <person name="Moore K."/>
            <person name="Hurst S.M."/>
            <person name="Lucas M."/>
            <person name="Rochet M."/>
            <person name="Gaillardin C."/>
            <person name="Tallada V.A."/>
            <person name="Garzon A."/>
            <person name="Thode G."/>
            <person name="Daga R.R."/>
            <person name="Cruzado L."/>
            <person name="Jimenez J."/>
            <person name="Sanchez M."/>
            <person name="del Rey F."/>
            <person name="Benito J."/>
            <person name="Dominguez A."/>
            <person name="Revuelta J.L."/>
            <person name="Moreno S."/>
            <person name="Armstrong J."/>
            <person name="Forsburg S.L."/>
            <person name="Cerutti L."/>
            <person name="Lowe T."/>
            <person name="McCombie W.R."/>
            <person name="Paulsen I."/>
            <person name="Potashkin J."/>
            <person name="Shpakovski G.V."/>
            <person name="Ussery D."/>
            <person name="Barrell B.G."/>
            <person name="Nurse P."/>
        </authorList>
    </citation>
    <scope>NUCLEOTIDE SEQUENCE [LARGE SCALE GENOMIC DNA]</scope>
    <source>
        <strain>972 / ATCC 24843</strain>
    </source>
</reference>
<reference key="2">
    <citation type="journal article" date="2000" name="Genes Cells">
        <title>Large-scale screening of intracellular protein localization in living fission yeast cells by the use of a GFP-fusion genomic DNA library.</title>
        <authorList>
            <person name="Ding D.-Q."/>
            <person name="Tomita Y."/>
            <person name="Yamamoto A."/>
            <person name="Chikashige Y."/>
            <person name="Haraguchi T."/>
            <person name="Hiraoka Y."/>
        </authorList>
    </citation>
    <scope>NUCLEOTIDE SEQUENCE [LARGE SCALE GENOMIC DNA] OF 752-966</scope>
    <scope>SUBCELLULAR LOCATION</scope>
    <source>
        <strain>ATCC 38364 / 968</strain>
    </source>
</reference>
<reference key="3">
    <citation type="journal article" date="2006" name="Nat. Biotechnol.">
        <title>ORFeome cloning and global analysis of protein localization in the fission yeast Schizosaccharomyces pombe.</title>
        <authorList>
            <person name="Matsuyama A."/>
            <person name="Arai R."/>
            <person name="Yashiroda Y."/>
            <person name="Shirai A."/>
            <person name="Kamata A."/>
            <person name="Sekido S."/>
            <person name="Kobayashi Y."/>
            <person name="Hashimoto A."/>
            <person name="Hamamoto M."/>
            <person name="Hiraoka Y."/>
            <person name="Horinouchi S."/>
            <person name="Yoshida M."/>
        </authorList>
    </citation>
    <scope>SUBCELLULAR LOCATION [LARGE SCALE ANALYSIS]</scope>
</reference>
<reference key="4">
    <citation type="journal article" date="2007" name="Cell">
        <title>RNAi-dependent and -independent RNA turnover mechanisms contribute to heterochromatic gene silencing.</title>
        <authorList>
            <person name="Buehler M."/>
            <person name="Haas W."/>
            <person name="Gygi S.P."/>
            <person name="Moazed D."/>
        </authorList>
    </citation>
    <scope>IDENTIFICATION IN THE TRAMP COMPLEX</scope>
</reference>
<reference key="5">
    <citation type="journal article" date="2010" name="RNA">
        <title>Proteomic and functional analysis of the noncanonical poly(A) polymerase Cid14.</title>
        <authorList>
            <person name="Keller C."/>
            <person name="Woolcock K."/>
            <person name="Hess D."/>
            <person name="Buehler M."/>
        </authorList>
    </citation>
    <scope>IDENTIFICATION IN THE TRAMP COMPLEX</scope>
    <scope>IDENTIFICATION BY MASS SPECTROMETRY</scope>
</reference>
<dbReference type="EC" id="3.6.4.-"/>
<dbReference type="EMBL" id="CU329670">
    <property type="protein sequence ID" value="CAB11099.1"/>
    <property type="molecule type" value="Genomic_DNA"/>
</dbReference>
<dbReference type="EMBL" id="AB027847">
    <property type="protein sequence ID" value="BAA87151.1"/>
    <property type="molecule type" value="Genomic_DNA"/>
</dbReference>
<dbReference type="PIR" id="T11667">
    <property type="entry name" value="T11667"/>
</dbReference>
<dbReference type="RefSeq" id="NP_593302.1">
    <property type="nucleotide sequence ID" value="NM_001018732.2"/>
</dbReference>
<dbReference type="SMR" id="O14232"/>
<dbReference type="BioGRID" id="278135">
    <property type="interactions" value="20"/>
</dbReference>
<dbReference type="ELM" id="O14232"/>
<dbReference type="FunCoup" id="O14232">
    <property type="interactions" value="1095"/>
</dbReference>
<dbReference type="IntAct" id="O14232">
    <property type="interactions" value="2"/>
</dbReference>
<dbReference type="STRING" id="284812.O14232"/>
<dbReference type="iPTMnet" id="O14232"/>
<dbReference type="PaxDb" id="4896-SPAC6F12.16c.1"/>
<dbReference type="EnsemblFungi" id="SPAC6F12.16c.1">
    <property type="protein sequence ID" value="SPAC6F12.16c.1:pep"/>
    <property type="gene ID" value="SPAC6F12.16c"/>
</dbReference>
<dbReference type="PomBase" id="SPAC6F12.16c">
    <property type="gene designation" value="mtr4"/>
</dbReference>
<dbReference type="VEuPathDB" id="FungiDB:SPAC6F12.16c"/>
<dbReference type="eggNOG" id="KOG0948">
    <property type="taxonomic scope" value="Eukaryota"/>
</dbReference>
<dbReference type="HOGENOM" id="CLU_002902_1_4_1"/>
<dbReference type="InParanoid" id="O14232"/>
<dbReference type="OMA" id="IMLKNYN"/>
<dbReference type="PhylomeDB" id="O14232"/>
<dbReference type="Reactome" id="R-SPO-6791226">
    <property type="pathway name" value="Major pathway of rRNA processing in the nucleolus and cytosol"/>
</dbReference>
<dbReference type="Reactome" id="R-SPO-72163">
    <property type="pathway name" value="mRNA Splicing - Major Pathway"/>
</dbReference>
<dbReference type="PRO" id="PR:O14232"/>
<dbReference type="Proteomes" id="UP000002485">
    <property type="component" value="Chromosome I"/>
</dbReference>
<dbReference type="GO" id="GO:0005730">
    <property type="term" value="C:nucleolus"/>
    <property type="evidence" value="ECO:0000266"/>
    <property type="project" value="PomBase"/>
</dbReference>
<dbReference type="GO" id="GO:0005634">
    <property type="term" value="C:nucleus"/>
    <property type="evidence" value="ECO:0007005"/>
    <property type="project" value="PomBase"/>
</dbReference>
<dbReference type="GO" id="GO:0031499">
    <property type="term" value="C:TRAMP complex"/>
    <property type="evidence" value="ECO:0000314"/>
    <property type="project" value="PomBase"/>
</dbReference>
<dbReference type="GO" id="GO:0005524">
    <property type="term" value="F:ATP binding"/>
    <property type="evidence" value="ECO:0007669"/>
    <property type="project" value="UniProtKB-KW"/>
</dbReference>
<dbReference type="GO" id="GO:0016887">
    <property type="term" value="F:ATP hydrolysis activity"/>
    <property type="evidence" value="ECO:0000305"/>
    <property type="project" value="PomBase"/>
</dbReference>
<dbReference type="GO" id="GO:0003723">
    <property type="term" value="F:RNA binding"/>
    <property type="evidence" value="ECO:0007669"/>
    <property type="project" value="InterPro"/>
</dbReference>
<dbReference type="GO" id="GO:0003724">
    <property type="term" value="F:RNA helicase activity"/>
    <property type="evidence" value="ECO:0000269"/>
    <property type="project" value="PomBase"/>
</dbReference>
<dbReference type="GO" id="GO:0000460">
    <property type="term" value="P:maturation of 5.8S rRNA"/>
    <property type="evidence" value="ECO:0000318"/>
    <property type="project" value="GO_Central"/>
</dbReference>
<dbReference type="GO" id="GO:0043634">
    <property type="term" value="P:polyadenylation-dependent ncRNA catabolic process"/>
    <property type="evidence" value="ECO:0000266"/>
    <property type="project" value="PomBase"/>
</dbReference>
<dbReference type="GO" id="GO:0006401">
    <property type="term" value="P:RNA catabolic process"/>
    <property type="evidence" value="ECO:0000314"/>
    <property type="project" value="PomBase"/>
</dbReference>
<dbReference type="GO" id="GO:0140746">
    <property type="term" value="P:siRNA catabolic process"/>
    <property type="evidence" value="ECO:0000315"/>
    <property type="project" value="PomBase"/>
</dbReference>
<dbReference type="GO" id="GO:0071038">
    <property type="term" value="P:TRAMP-dependent tRNA surveillance pathway"/>
    <property type="evidence" value="ECO:0000266"/>
    <property type="project" value="PomBase"/>
</dbReference>
<dbReference type="CDD" id="cd18024">
    <property type="entry name" value="DEXHc_Mtr4-like"/>
    <property type="match status" value="1"/>
</dbReference>
<dbReference type="CDD" id="cd13154">
    <property type="entry name" value="KOW_Mtr4"/>
    <property type="match status" value="1"/>
</dbReference>
<dbReference type="CDD" id="cd18795">
    <property type="entry name" value="SF2_C_Ski2"/>
    <property type="match status" value="1"/>
</dbReference>
<dbReference type="FunFam" id="3.40.50.300:FF:000083">
    <property type="entry name" value="ATP-dependent RNA helicase DOB1"/>
    <property type="match status" value="1"/>
</dbReference>
<dbReference type="FunFam" id="3.40.50.300:FF:000141">
    <property type="entry name" value="ATP-dependent RNA helicase DOB1"/>
    <property type="match status" value="1"/>
</dbReference>
<dbReference type="FunFam" id="2.40.30.300:FF:000001">
    <property type="entry name" value="Mtr4 exosome RNA helicase"/>
    <property type="match status" value="1"/>
</dbReference>
<dbReference type="FunFam" id="1.10.3380.30:FF:000002">
    <property type="entry name" value="superkiller viralicidic activity 2-like 2"/>
    <property type="match status" value="1"/>
</dbReference>
<dbReference type="Gene3D" id="1.10.3380.30">
    <property type="match status" value="1"/>
</dbReference>
<dbReference type="Gene3D" id="2.40.30.300">
    <property type="match status" value="1"/>
</dbReference>
<dbReference type="Gene3D" id="3.40.50.300">
    <property type="entry name" value="P-loop containing nucleotide triphosphate hydrolases"/>
    <property type="match status" value="2"/>
</dbReference>
<dbReference type="InterPro" id="IPR011545">
    <property type="entry name" value="DEAD/DEAH_box_helicase_dom"/>
</dbReference>
<dbReference type="InterPro" id="IPR014001">
    <property type="entry name" value="Helicase_ATP-bd"/>
</dbReference>
<dbReference type="InterPro" id="IPR001650">
    <property type="entry name" value="Helicase_C-like"/>
</dbReference>
<dbReference type="InterPro" id="IPR048392">
    <property type="entry name" value="MTR4-like_stalk"/>
</dbReference>
<dbReference type="InterPro" id="IPR025696">
    <property type="entry name" value="MTR4_beta-barrel"/>
</dbReference>
<dbReference type="InterPro" id="IPR027417">
    <property type="entry name" value="P-loop_NTPase"/>
</dbReference>
<dbReference type="InterPro" id="IPR050699">
    <property type="entry name" value="RNA-DNA_Helicase"/>
</dbReference>
<dbReference type="InterPro" id="IPR016438">
    <property type="entry name" value="SKI2-like"/>
</dbReference>
<dbReference type="InterPro" id="IPR012961">
    <property type="entry name" value="Ski2/MTR4_C"/>
</dbReference>
<dbReference type="PANTHER" id="PTHR12131">
    <property type="entry name" value="ATP-DEPENDENT RNA AND DNA HELICASE"/>
    <property type="match status" value="1"/>
</dbReference>
<dbReference type="PANTHER" id="PTHR12131:SF7">
    <property type="entry name" value="EXOSOME RNA HELICASE MTR4"/>
    <property type="match status" value="1"/>
</dbReference>
<dbReference type="Pfam" id="PF00270">
    <property type="entry name" value="DEAD"/>
    <property type="match status" value="1"/>
</dbReference>
<dbReference type="Pfam" id="PF08148">
    <property type="entry name" value="DSHCT"/>
    <property type="match status" value="1"/>
</dbReference>
<dbReference type="Pfam" id="PF00271">
    <property type="entry name" value="Helicase_C"/>
    <property type="match status" value="1"/>
</dbReference>
<dbReference type="Pfam" id="PF21408">
    <property type="entry name" value="MTR4-like_stalk"/>
    <property type="match status" value="1"/>
</dbReference>
<dbReference type="Pfam" id="PF13234">
    <property type="entry name" value="MTR4_beta-barrel"/>
    <property type="match status" value="1"/>
</dbReference>
<dbReference type="PIRSF" id="PIRSF005198">
    <property type="entry name" value="Antiviral_helicase_SKI2"/>
    <property type="match status" value="1"/>
</dbReference>
<dbReference type="SMART" id="SM00487">
    <property type="entry name" value="DEXDc"/>
    <property type="match status" value="1"/>
</dbReference>
<dbReference type="SMART" id="SM01142">
    <property type="entry name" value="DSHCT"/>
    <property type="match status" value="1"/>
</dbReference>
<dbReference type="SMART" id="SM00490">
    <property type="entry name" value="HELICc"/>
    <property type="match status" value="1"/>
</dbReference>
<dbReference type="SUPFAM" id="SSF52540">
    <property type="entry name" value="P-loop containing nucleoside triphosphate hydrolases"/>
    <property type="match status" value="1"/>
</dbReference>
<dbReference type="PROSITE" id="PS51192">
    <property type="entry name" value="HELICASE_ATP_BIND_1"/>
    <property type="match status" value="1"/>
</dbReference>
<dbReference type="PROSITE" id="PS51194">
    <property type="entry name" value="HELICASE_CTER"/>
    <property type="match status" value="1"/>
</dbReference>
<keyword id="KW-0067">ATP-binding</keyword>
<keyword id="KW-0347">Helicase</keyword>
<keyword id="KW-0378">Hydrolase</keyword>
<keyword id="KW-0547">Nucleotide-binding</keyword>
<keyword id="KW-0539">Nucleus</keyword>
<keyword id="KW-1185">Reference proteome</keyword>
<keyword id="KW-0698">rRNA processing</keyword>
<name>MTR4_SCHPO</name>
<protein>
    <recommendedName>
        <fullName>ATP-dependent RNA helicase mtr4</fullName>
        <ecNumber>3.6.4.-</ecNumber>
    </recommendedName>
</protein>
<accession>O14232</accession>
<accession>Q9USD3</accession>
<organism>
    <name type="scientific">Schizosaccharomyces pombe (strain 972 / ATCC 24843)</name>
    <name type="common">Fission yeast</name>
    <dbReference type="NCBI Taxonomy" id="284812"/>
    <lineage>
        <taxon>Eukaryota</taxon>
        <taxon>Fungi</taxon>
        <taxon>Dikarya</taxon>
        <taxon>Ascomycota</taxon>
        <taxon>Taphrinomycotina</taxon>
        <taxon>Schizosaccharomycetes</taxon>
        <taxon>Schizosaccharomycetales</taxon>
        <taxon>Schizosaccharomycetaceae</taxon>
        <taxon>Schizosaccharomyces</taxon>
    </lineage>
</organism>
<comment type="function">
    <text evidence="1">Component of the TRAMP complex which has a poly(A) RNA polymerase activity and is involved in a post-transcriptional quality control mechanism limiting inappropriate expression of genetic information. Polyadenylation is required for the degradative activity of the exosome on several of its nuclear RNA substrates (By similarity). Required for heterochromatic gene silencing at centromeric repeats by either exosome- or RNAi-mediated degradation of heterochromatic transcripts.</text>
</comment>
<comment type="subunit">
    <text evidence="7 8">Component of the TRAMP complex composed of at least cid14, mtr4, and air1.</text>
</comment>
<comment type="subcellular location">
    <subcellularLocation>
        <location evidence="5 6">Nucleus</location>
    </subcellularLocation>
</comment>
<comment type="similarity">
    <text evidence="9">Belongs to the helicase family. SKI2 subfamily.</text>
</comment>
<evidence type="ECO:0000250" key="1"/>
<evidence type="ECO:0000255" key="2">
    <source>
        <dbReference type="PROSITE-ProRule" id="PRU00541"/>
    </source>
</evidence>
<evidence type="ECO:0000255" key="3">
    <source>
        <dbReference type="PROSITE-ProRule" id="PRU00542"/>
    </source>
</evidence>
<evidence type="ECO:0000256" key="4">
    <source>
        <dbReference type="SAM" id="MobiDB-lite"/>
    </source>
</evidence>
<evidence type="ECO:0000269" key="5">
    <source>
    </source>
</evidence>
<evidence type="ECO:0000269" key="6">
    <source>
    </source>
</evidence>
<evidence type="ECO:0000269" key="7">
    <source>
    </source>
</evidence>
<evidence type="ECO:0000269" key="8">
    <source>
    </source>
</evidence>
<evidence type="ECO:0000305" key="9"/>